<comment type="function">
    <text evidence="1">Involved in regulation of membrane traffic between the Golgi and the endoplasmic reticulum; the function is proposed to depend on its association in the NRZ complex which is believed to play a role in SNARE assembly at the ER. May play a role in cell cycle checkpoint control. Essential for telomere length control (By similarity).</text>
</comment>
<comment type="subunit">
    <text evidence="1">Component of the NRZ complex composed of NBAS, ZW10 and RINT1/TIP20L; NRZ associates with SNAREs STX18, USE1L, BNIP1/SEC20L and SEC22B (the assembly has been described as syntaxin 18 complex). Interacts directly with BNIP1/SEC20L and ZW10. Interacts with RAD50 during late S and G2/M phases. Interacts with RBL2, preferentially with the active, hypophosphorylated form (By similarity).</text>
</comment>
<comment type="subcellular location">
    <subcellularLocation>
        <location evidence="1">Cytoplasm</location>
    </subcellularLocation>
    <subcellularLocation>
        <location evidence="1">Endoplasmic reticulum membrane</location>
        <topology evidence="1">Peripheral membrane protein</topology>
    </subcellularLocation>
</comment>
<comment type="alternative products">
    <event type="alternative splicing"/>
    <isoform>
        <id>Q8BZ36-1</id>
        <name>1</name>
        <sequence type="displayed"/>
    </isoform>
    <isoform>
        <id>Q8BZ36-2</id>
        <name>2</name>
        <sequence type="described" ref="VSP_012658"/>
    </isoform>
</comment>
<comment type="similarity">
    <text evidence="6">Belongs to the RINT1 family.</text>
</comment>
<comment type="sequence caution" evidence="6">
    <conflict type="frameshift">
        <sequence resource="EMBL-CDS" id="BAC29582"/>
    </conflict>
</comment>
<evidence type="ECO:0000250" key="1">
    <source>
        <dbReference type="UniProtKB" id="Q6NUQ1"/>
    </source>
</evidence>
<evidence type="ECO:0000255" key="2"/>
<evidence type="ECO:0000255" key="3">
    <source>
        <dbReference type="PROSITE-ProRule" id="PRU00717"/>
    </source>
</evidence>
<evidence type="ECO:0000256" key="4">
    <source>
        <dbReference type="SAM" id="MobiDB-lite"/>
    </source>
</evidence>
<evidence type="ECO:0000303" key="5">
    <source>
    </source>
</evidence>
<evidence type="ECO:0000305" key="6"/>
<dbReference type="EMBL" id="AK028707">
    <property type="protein sequence ID" value="BAC26077.1"/>
    <property type="molecule type" value="mRNA"/>
</dbReference>
<dbReference type="EMBL" id="AK036805">
    <property type="protein sequence ID" value="BAC29582.1"/>
    <property type="status" value="ALT_FRAME"/>
    <property type="molecule type" value="mRNA"/>
</dbReference>
<dbReference type="EMBL" id="AK135334">
    <property type="protein sequence ID" value="BAE22492.1"/>
    <property type="molecule type" value="mRNA"/>
</dbReference>
<dbReference type="EMBL" id="BC065059">
    <property type="protein sequence ID" value="AAH65059.2"/>
    <property type="molecule type" value="mRNA"/>
</dbReference>
<dbReference type="CCDS" id="CCDS39025.1">
    <molecule id="Q8BZ36-1"/>
</dbReference>
<dbReference type="CCDS" id="CCDS80220.1">
    <molecule id="Q8BZ36-2"/>
</dbReference>
<dbReference type="RefSeq" id="NP_001297396.1">
    <molecule id="Q8BZ36-2"/>
    <property type="nucleotide sequence ID" value="NM_001310467.1"/>
</dbReference>
<dbReference type="RefSeq" id="NP_796297.2">
    <molecule id="Q8BZ36-1"/>
    <property type="nucleotide sequence ID" value="NM_177323.4"/>
</dbReference>
<dbReference type="SMR" id="Q8BZ36"/>
<dbReference type="BioGRID" id="215557">
    <property type="interactions" value="2"/>
</dbReference>
<dbReference type="FunCoup" id="Q8BZ36">
    <property type="interactions" value="4096"/>
</dbReference>
<dbReference type="IntAct" id="Q8BZ36">
    <property type="interactions" value="1"/>
</dbReference>
<dbReference type="MINT" id="Q8BZ36"/>
<dbReference type="STRING" id="10090.ENSMUSP00000030852"/>
<dbReference type="iPTMnet" id="Q8BZ36"/>
<dbReference type="PhosphoSitePlus" id="Q8BZ36"/>
<dbReference type="SwissPalm" id="Q8BZ36"/>
<dbReference type="PaxDb" id="10090-ENSMUSP00000030852"/>
<dbReference type="PeptideAtlas" id="Q8BZ36"/>
<dbReference type="ProteomicsDB" id="253243">
    <molecule id="Q8BZ36-1"/>
</dbReference>
<dbReference type="ProteomicsDB" id="253244">
    <molecule id="Q8BZ36-2"/>
</dbReference>
<dbReference type="Pumba" id="Q8BZ36"/>
<dbReference type="Antibodypedia" id="17090">
    <property type="antibodies" value="107 antibodies from 22 providers"/>
</dbReference>
<dbReference type="DNASU" id="72772"/>
<dbReference type="Ensembl" id="ENSMUST00000030852.13">
    <molecule id="Q8BZ36-1"/>
    <property type="protein sequence ID" value="ENSMUSP00000030852.7"/>
    <property type="gene ID" value="ENSMUSG00000028999.16"/>
</dbReference>
<dbReference type="Ensembl" id="ENSMUST00000115113.3">
    <molecule id="Q8BZ36-2"/>
    <property type="protein sequence ID" value="ENSMUSP00000110766.3"/>
    <property type="gene ID" value="ENSMUSG00000028999.16"/>
</dbReference>
<dbReference type="GeneID" id="72772"/>
<dbReference type="KEGG" id="mmu:72772"/>
<dbReference type="UCSC" id="uc008wqq.1">
    <molecule id="Q8BZ36-1"/>
    <property type="organism name" value="mouse"/>
</dbReference>
<dbReference type="UCSC" id="uc012dsx.1">
    <molecule id="Q8BZ36-2"/>
    <property type="organism name" value="mouse"/>
</dbReference>
<dbReference type="AGR" id="MGI:1916233"/>
<dbReference type="CTD" id="60561"/>
<dbReference type="MGI" id="MGI:1916233">
    <property type="gene designation" value="Rint1"/>
</dbReference>
<dbReference type="VEuPathDB" id="HostDB:ENSMUSG00000028999"/>
<dbReference type="eggNOG" id="KOG2218">
    <property type="taxonomic scope" value="Eukaryota"/>
</dbReference>
<dbReference type="GeneTree" id="ENSGT00390000017006"/>
<dbReference type="HOGENOM" id="CLU_020201_0_0_1"/>
<dbReference type="InParanoid" id="Q8BZ36"/>
<dbReference type="OMA" id="GMTWEVL"/>
<dbReference type="OrthoDB" id="2189254at2759"/>
<dbReference type="PhylomeDB" id="Q8BZ36"/>
<dbReference type="TreeFam" id="TF324274"/>
<dbReference type="Reactome" id="R-MMU-6811434">
    <property type="pathway name" value="COPI-dependent Golgi-to-ER retrograde traffic"/>
</dbReference>
<dbReference type="BioGRID-ORCS" id="72772">
    <property type="hits" value="20 hits in 76 CRISPR screens"/>
</dbReference>
<dbReference type="ChiTaRS" id="Rint1">
    <property type="organism name" value="mouse"/>
</dbReference>
<dbReference type="PRO" id="PR:Q8BZ36"/>
<dbReference type="Proteomes" id="UP000000589">
    <property type="component" value="Chromosome 5"/>
</dbReference>
<dbReference type="RNAct" id="Q8BZ36">
    <property type="molecule type" value="protein"/>
</dbReference>
<dbReference type="Bgee" id="ENSMUSG00000028999">
    <property type="expression patterns" value="Expressed in rostral migratory stream and 217 other cell types or tissues"/>
</dbReference>
<dbReference type="ExpressionAtlas" id="Q8BZ36">
    <property type="expression patterns" value="baseline and differential"/>
</dbReference>
<dbReference type="GO" id="GO:0070939">
    <property type="term" value="C:Dsl1/NZR complex"/>
    <property type="evidence" value="ECO:0007669"/>
    <property type="project" value="Ensembl"/>
</dbReference>
<dbReference type="GO" id="GO:0005783">
    <property type="term" value="C:endoplasmic reticulum"/>
    <property type="evidence" value="ECO:0000250"/>
    <property type="project" value="HGNC-UCL"/>
</dbReference>
<dbReference type="GO" id="GO:0005789">
    <property type="term" value="C:endoplasmic reticulum membrane"/>
    <property type="evidence" value="ECO:0007669"/>
    <property type="project" value="UniProtKB-SubCell"/>
</dbReference>
<dbReference type="GO" id="GO:0006888">
    <property type="term" value="P:endoplasmic reticulum to Golgi vesicle-mediated transport"/>
    <property type="evidence" value="ECO:0007669"/>
    <property type="project" value="InterPro"/>
</dbReference>
<dbReference type="GO" id="GO:0007095">
    <property type="term" value="P:mitotic G2 DNA damage checkpoint signaling"/>
    <property type="evidence" value="ECO:0000250"/>
    <property type="project" value="HGNC"/>
</dbReference>
<dbReference type="GO" id="GO:0015031">
    <property type="term" value="P:protein transport"/>
    <property type="evidence" value="ECO:0007669"/>
    <property type="project" value="UniProtKB-KW"/>
</dbReference>
<dbReference type="GO" id="GO:0060628">
    <property type="term" value="P:regulation of ER to Golgi vesicle-mediated transport"/>
    <property type="evidence" value="ECO:0007669"/>
    <property type="project" value="Ensembl"/>
</dbReference>
<dbReference type="GO" id="GO:0006890">
    <property type="term" value="P:retrograde vesicle-mediated transport, Golgi to endoplasmic reticulum"/>
    <property type="evidence" value="ECO:0007669"/>
    <property type="project" value="InterPro"/>
</dbReference>
<dbReference type="FunFam" id="1.20.58.670:FF:000003">
    <property type="entry name" value="RAD50-interacting protein 1"/>
    <property type="match status" value="1"/>
</dbReference>
<dbReference type="Gene3D" id="1.20.58.670">
    <property type="entry name" value="Dsl1p vesicle tethering complex, Tip20p subunit, domain D"/>
    <property type="match status" value="1"/>
</dbReference>
<dbReference type="InterPro" id="IPR042044">
    <property type="entry name" value="EXOC6PINT-1/Sec15/Tip20_C_dom2"/>
</dbReference>
<dbReference type="InterPro" id="IPR007528">
    <property type="entry name" value="RINT1_Tip20"/>
</dbReference>
<dbReference type="PANTHER" id="PTHR13520:SF0">
    <property type="entry name" value="RAD50-INTERACTING PROTEIN 1"/>
    <property type="match status" value="1"/>
</dbReference>
<dbReference type="PANTHER" id="PTHR13520">
    <property type="entry name" value="RAD50-INTERACTING PROTEIN 1 RINT-1"/>
    <property type="match status" value="1"/>
</dbReference>
<dbReference type="Pfam" id="PF04437">
    <property type="entry name" value="RINT1_TIP1"/>
    <property type="match status" value="1"/>
</dbReference>
<dbReference type="PROSITE" id="PS51386">
    <property type="entry name" value="RINT1_TIP20"/>
    <property type="match status" value="1"/>
</dbReference>
<gene>
    <name type="primary">Rint1</name>
</gene>
<protein>
    <recommendedName>
        <fullName>RAD50-interacting protein 1</fullName>
    </recommendedName>
    <alternativeName>
        <fullName>RAD50 interactor 1</fullName>
        <shortName>RINT-1</shortName>
    </alternativeName>
</protein>
<reference key="1">
    <citation type="journal article" date="2005" name="Science">
        <title>The transcriptional landscape of the mammalian genome.</title>
        <authorList>
            <person name="Carninci P."/>
            <person name="Kasukawa T."/>
            <person name="Katayama S."/>
            <person name="Gough J."/>
            <person name="Frith M.C."/>
            <person name="Maeda N."/>
            <person name="Oyama R."/>
            <person name="Ravasi T."/>
            <person name="Lenhard B."/>
            <person name="Wells C."/>
            <person name="Kodzius R."/>
            <person name="Shimokawa K."/>
            <person name="Bajic V.B."/>
            <person name="Brenner S.E."/>
            <person name="Batalov S."/>
            <person name="Forrest A.R."/>
            <person name="Zavolan M."/>
            <person name="Davis M.J."/>
            <person name="Wilming L.G."/>
            <person name="Aidinis V."/>
            <person name="Allen J.E."/>
            <person name="Ambesi-Impiombato A."/>
            <person name="Apweiler R."/>
            <person name="Aturaliya R.N."/>
            <person name="Bailey T.L."/>
            <person name="Bansal M."/>
            <person name="Baxter L."/>
            <person name="Beisel K.W."/>
            <person name="Bersano T."/>
            <person name="Bono H."/>
            <person name="Chalk A.M."/>
            <person name="Chiu K.P."/>
            <person name="Choudhary V."/>
            <person name="Christoffels A."/>
            <person name="Clutterbuck D.R."/>
            <person name="Crowe M.L."/>
            <person name="Dalla E."/>
            <person name="Dalrymple B.P."/>
            <person name="de Bono B."/>
            <person name="Della Gatta G."/>
            <person name="di Bernardo D."/>
            <person name="Down T."/>
            <person name="Engstrom P."/>
            <person name="Fagiolini M."/>
            <person name="Faulkner G."/>
            <person name="Fletcher C.F."/>
            <person name="Fukushima T."/>
            <person name="Furuno M."/>
            <person name="Futaki S."/>
            <person name="Gariboldi M."/>
            <person name="Georgii-Hemming P."/>
            <person name="Gingeras T.R."/>
            <person name="Gojobori T."/>
            <person name="Green R.E."/>
            <person name="Gustincich S."/>
            <person name="Harbers M."/>
            <person name="Hayashi Y."/>
            <person name="Hensch T.K."/>
            <person name="Hirokawa N."/>
            <person name="Hill D."/>
            <person name="Huminiecki L."/>
            <person name="Iacono M."/>
            <person name="Ikeo K."/>
            <person name="Iwama A."/>
            <person name="Ishikawa T."/>
            <person name="Jakt M."/>
            <person name="Kanapin A."/>
            <person name="Katoh M."/>
            <person name="Kawasawa Y."/>
            <person name="Kelso J."/>
            <person name="Kitamura H."/>
            <person name="Kitano H."/>
            <person name="Kollias G."/>
            <person name="Krishnan S.P."/>
            <person name="Kruger A."/>
            <person name="Kummerfeld S.K."/>
            <person name="Kurochkin I.V."/>
            <person name="Lareau L.F."/>
            <person name="Lazarevic D."/>
            <person name="Lipovich L."/>
            <person name="Liu J."/>
            <person name="Liuni S."/>
            <person name="McWilliam S."/>
            <person name="Madan Babu M."/>
            <person name="Madera M."/>
            <person name="Marchionni L."/>
            <person name="Matsuda H."/>
            <person name="Matsuzawa S."/>
            <person name="Miki H."/>
            <person name="Mignone F."/>
            <person name="Miyake S."/>
            <person name="Morris K."/>
            <person name="Mottagui-Tabar S."/>
            <person name="Mulder N."/>
            <person name="Nakano N."/>
            <person name="Nakauchi H."/>
            <person name="Ng P."/>
            <person name="Nilsson R."/>
            <person name="Nishiguchi S."/>
            <person name="Nishikawa S."/>
            <person name="Nori F."/>
            <person name="Ohara O."/>
            <person name="Okazaki Y."/>
            <person name="Orlando V."/>
            <person name="Pang K.C."/>
            <person name="Pavan W.J."/>
            <person name="Pavesi G."/>
            <person name="Pesole G."/>
            <person name="Petrovsky N."/>
            <person name="Piazza S."/>
            <person name="Reed J."/>
            <person name="Reid J.F."/>
            <person name="Ring B.Z."/>
            <person name="Ringwald M."/>
            <person name="Rost B."/>
            <person name="Ruan Y."/>
            <person name="Salzberg S.L."/>
            <person name="Sandelin A."/>
            <person name="Schneider C."/>
            <person name="Schoenbach C."/>
            <person name="Sekiguchi K."/>
            <person name="Semple C.A."/>
            <person name="Seno S."/>
            <person name="Sessa L."/>
            <person name="Sheng Y."/>
            <person name="Shibata Y."/>
            <person name="Shimada H."/>
            <person name="Shimada K."/>
            <person name="Silva D."/>
            <person name="Sinclair B."/>
            <person name="Sperling S."/>
            <person name="Stupka E."/>
            <person name="Sugiura K."/>
            <person name="Sultana R."/>
            <person name="Takenaka Y."/>
            <person name="Taki K."/>
            <person name="Tammoja K."/>
            <person name="Tan S.L."/>
            <person name="Tang S."/>
            <person name="Taylor M.S."/>
            <person name="Tegner J."/>
            <person name="Teichmann S.A."/>
            <person name="Ueda H.R."/>
            <person name="van Nimwegen E."/>
            <person name="Verardo R."/>
            <person name="Wei C.L."/>
            <person name="Yagi K."/>
            <person name="Yamanishi H."/>
            <person name="Zabarovsky E."/>
            <person name="Zhu S."/>
            <person name="Zimmer A."/>
            <person name="Hide W."/>
            <person name="Bult C."/>
            <person name="Grimmond S.M."/>
            <person name="Teasdale R.D."/>
            <person name="Liu E.T."/>
            <person name="Brusic V."/>
            <person name="Quackenbush J."/>
            <person name="Wahlestedt C."/>
            <person name="Mattick J.S."/>
            <person name="Hume D.A."/>
            <person name="Kai C."/>
            <person name="Sasaki D."/>
            <person name="Tomaru Y."/>
            <person name="Fukuda S."/>
            <person name="Kanamori-Katayama M."/>
            <person name="Suzuki M."/>
            <person name="Aoki J."/>
            <person name="Arakawa T."/>
            <person name="Iida J."/>
            <person name="Imamura K."/>
            <person name="Itoh M."/>
            <person name="Kato T."/>
            <person name="Kawaji H."/>
            <person name="Kawagashira N."/>
            <person name="Kawashima T."/>
            <person name="Kojima M."/>
            <person name="Kondo S."/>
            <person name="Konno H."/>
            <person name="Nakano K."/>
            <person name="Ninomiya N."/>
            <person name="Nishio T."/>
            <person name="Okada M."/>
            <person name="Plessy C."/>
            <person name="Shibata K."/>
            <person name="Shiraki T."/>
            <person name="Suzuki S."/>
            <person name="Tagami M."/>
            <person name="Waki K."/>
            <person name="Watahiki A."/>
            <person name="Okamura-Oho Y."/>
            <person name="Suzuki H."/>
            <person name="Kawai J."/>
            <person name="Hayashizaki Y."/>
        </authorList>
    </citation>
    <scope>NUCLEOTIDE SEQUENCE [LARGE SCALE MRNA] (ISOFORMS 1 AND 2)</scope>
    <source>
        <strain>C57BL/6J</strain>
        <tissue>Skin</tissue>
        <tissue>Vagina</tissue>
        <tissue>Wolffian duct</tissue>
    </source>
</reference>
<reference key="2">
    <citation type="journal article" date="2004" name="Genome Res.">
        <title>The status, quality, and expansion of the NIH full-length cDNA project: the Mammalian Gene Collection (MGC).</title>
        <authorList>
            <consortium name="The MGC Project Team"/>
        </authorList>
    </citation>
    <scope>NUCLEOTIDE SEQUENCE [LARGE SCALE MRNA] (ISOFORM 1)</scope>
    <source>
        <strain>C57BL/6J</strain>
        <tissue>Embryonic brain</tissue>
    </source>
</reference>
<reference key="3">
    <citation type="journal article" date="2010" name="Cell">
        <title>A tissue-specific atlas of mouse protein phosphorylation and expression.</title>
        <authorList>
            <person name="Huttlin E.L."/>
            <person name="Jedrychowski M.P."/>
            <person name="Elias J.E."/>
            <person name="Goswami T."/>
            <person name="Rad R."/>
            <person name="Beausoleil S.A."/>
            <person name="Villen J."/>
            <person name="Haas W."/>
            <person name="Sowa M.E."/>
            <person name="Gygi S.P."/>
        </authorList>
    </citation>
    <scope>IDENTIFICATION BY MASS SPECTROMETRY [LARGE SCALE ANALYSIS]</scope>
    <source>
        <tissue>Kidney</tissue>
        <tissue>Liver</tissue>
        <tissue>Pancreas</tissue>
        <tissue>Spleen</tissue>
        <tissue>Testis</tissue>
    </source>
</reference>
<sequence length="792" mass="90094">MLAADDIGEVPAAPCCPESGDETKNTDVKSDVNTAAPAGSEQLSQGGSDDALLSYVSAFIEKEVGSDLKSLKTLGKLIEQMTESKVKLEEQVLTISSEIPKRIQSALKDAEESKQLLDEFLEQEAPLFSSISSHLLMAQPWMDDLGAMITQMEEIERHLAYLKWVSQTEELSDNIQQYLMTNSVPEAASLLVTMTELDIQLQESSCTHLLSFMRATVKFWHKILKDKLTSDFEEVLAQLHWPFTSHTQSQTVGGSRPAGTPELYSSLDTLFCQLLKLQASDELLTEPKQLPEKYCLPASPPVTLPIQVMLAPLQKRFRYHFRGSRQTNVMSKPEWYLAQVLMWIGNHTQFLDEKIQPILDKVGSAVNARLEFSRGLVMLILEKLASDIPCLLYDDSLFCHLVDEVLLFERELHTVHGYPSTFASCMHILSEETCFQRWLTVERKFALQKMDSMLSSEAAWVSQYKDISDVDEMKVPDCAEVFMTLLLVITDRYKNLPTASRKLQFLELQKDLVDDFRIRLTQVMKEETRAALGFRYCAILNAVNYISAVLADWADNVFFLQLQQAALEVFAENNVLSKLQLGQLASMESSVFDDMINLLERLKLDMLTRQVDHVFREVKDSAKLYKKERWLSLPSQSEQAVMSLSSSACPLLLTLRDRLLQLEQQLCFSLFRIFWQMLAEKLDLYIYQEIILANHFNEGGAAQLQFDMTRNLFPLFSHYCKRPENYFKHVKEACIILNLNIGSALLLKDVLQSVSEHIPATAALNEVGVYKLAQQDVEILLNLRTNWPNTGK</sequence>
<accession>Q8BZ36</accession>
<accession>Q3UXS1</accession>
<accession>Q6P1I2</accession>
<accession>Q8C193</accession>
<name>RINT1_MOUSE</name>
<keyword id="KW-0025">Alternative splicing</keyword>
<keyword id="KW-0131">Cell cycle</keyword>
<keyword id="KW-0175">Coiled coil</keyword>
<keyword id="KW-0963">Cytoplasm</keyword>
<keyword id="KW-0256">Endoplasmic reticulum</keyword>
<keyword id="KW-0931">ER-Golgi transport</keyword>
<keyword id="KW-0472">Membrane</keyword>
<keyword id="KW-0653">Protein transport</keyword>
<keyword id="KW-1185">Reference proteome</keyword>
<keyword id="KW-0813">Transport</keyword>
<organism>
    <name type="scientific">Mus musculus</name>
    <name type="common">Mouse</name>
    <dbReference type="NCBI Taxonomy" id="10090"/>
    <lineage>
        <taxon>Eukaryota</taxon>
        <taxon>Metazoa</taxon>
        <taxon>Chordata</taxon>
        <taxon>Craniata</taxon>
        <taxon>Vertebrata</taxon>
        <taxon>Euteleostomi</taxon>
        <taxon>Mammalia</taxon>
        <taxon>Eutheria</taxon>
        <taxon>Euarchontoglires</taxon>
        <taxon>Glires</taxon>
        <taxon>Rodentia</taxon>
        <taxon>Myomorpha</taxon>
        <taxon>Muroidea</taxon>
        <taxon>Muridae</taxon>
        <taxon>Murinae</taxon>
        <taxon>Mus</taxon>
        <taxon>Mus</taxon>
    </lineage>
</organism>
<proteinExistence type="evidence at protein level"/>
<feature type="chain" id="PRO_0000097350" description="RAD50-interacting protein 1">
    <location>
        <begin position="1"/>
        <end position="792"/>
    </location>
</feature>
<feature type="domain" description="RINT1/TIP20" evidence="3">
    <location>
        <begin position="220"/>
        <end position="792"/>
    </location>
</feature>
<feature type="region of interest" description="Disordered" evidence="4">
    <location>
        <begin position="1"/>
        <end position="47"/>
    </location>
</feature>
<feature type="coiled-coil region" evidence="2">
    <location>
        <begin position="71"/>
        <end position="123"/>
    </location>
</feature>
<feature type="compositionally biased region" description="Basic and acidic residues" evidence="4">
    <location>
        <begin position="21"/>
        <end position="30"/>
    </location>
</feature>
<feature type="splice variant" id="VSP_012658" description="In isoform 2." evidence="5">
    <location>
        <begin position="172"/>
        <end position="229"/>
    </location>
</feature>
<feature type="sequence conflict" description="In Ref. 1; BAC29582." evidence="6" ref="1">
    <original>K</original>
    <variation>N</variation>
    <location>
        <position position="24"/>
    </location>
</feature>
<feature type="sequence conflict" description="In Ref. 1; BAC26077." evidence="6" ref="1">
    <original>V</original>
    <variation>D</variation>
    <location>
        <position position="569"/>
    </location>
</feature>
<feature type="sequence conflict" description="In Ref. 1; BAC29582." evidence="6" ref="1">
    <original>S</original>
    <variation>C</variation>
    <location>
        <position position="743"/>
    </location>
</feature>